<name>SGF29_MOUSE</name>
<comment type="function">
    <text evidence="2 5">Chromatin reader component of some histone acetyltransferase (HAT) SAGA-type complexes like the TFTC-HAT, ATAC or STAGA complexes (By similarity). SGF29 specifically recognizes and binds methylated 'Lys-4' of histone H3 (H3K4me), with a preference for trimethylated form (H3K4me3) (By similarity). In the SAGA-type complexes, SGF29 is required to recruit complexes to H3K4me (By similarity). Involved in the response to endoplasmic reticulum (ER) stress by recruiting the SAGA complex to H3K4me, thereby promoting histone H3 acetylation and cell survival (By similarity). Also binds non-histone proteins that are methylated on Lys residues: specifically recognizes and binds CGAS monomethylated on 'Lys-491' (PubMed:35210392).</text>
</comment>
<comment type="subunit">
    <text evidence="1 2 5">Interacts with dimethylated and trimethylated 'Lys-4' of histone H3 (H3K4me2 and H3K4me3), with a preference for the trimethylated form (H3K4me3) (By similarity). Component of some SAGA-type complexes. Component of the ADA2A-containing complex (ATAC), composed of KAT14, KAT2A, TADA2L, TADA3L, ZZ3, MBIP, WDR5, YEATS2, CCDC101 and DR1 (By similarity). Interacts with (methylated) CGAS (PubMed:35210392). Interacts with TADA3L, GCN5L2, SUPT3H and MYC (By similarity).</text>
</comment>
<comment type="subcellular location">
    <subcellularLocation>
        <location evidence="1">Nucleus</location>
    </subcellularLocation>
</comment>
<comment type="domain">
    <text evidence="4">The SGF29 C-terminal (also named tudor-like) domain mediates binding to methylated 'Lys-4' of histone H3 (H3K4me).</text>
</comment>
<comment type="similarity">
    <text evidence="4">Belongs to the SGF29 family.</text>
</comment>
<organism>
    <name type="scientific">Mus musculus</name>
    <name type="common">Mouse</name>
    <dbReference type="NCBI Taxonomy" id="10090"/>
    <lineage>
        <taxon>Eukaryota</taxon>
        <taxon>Metazoa</taxon>
        <taxon>Chordata</taxon>
        <taxon>Craniata</taxon>
        <taxon>Vertebrata</taxon>
        <taxon>Euteleostomi</taxon>
        <taxon>Mammalia</taxon>
        <taxon>Eutheria</taxon>
        <taxon>Euarchontoglires</taxon>
        <taxon>Glires</taxon>
        <taxon>Rodentia</taxon>
        <taxon>Myomorpha</taxon>
        <taxon>Muroidea</taxon>
        <taxon>Muridae</taxon>
        <taxon>Murinae</taxon>
        <taxon>Mus</taxon>
        <taxon>Mus</taxon>
    </lineage>
</organism>
<accession>Q9DA08</accession>
<accession>Q8R0I6</accession>
<feature type="chain" id="PRO_0000274269" description="SAGA-associated factor 29">
    <location>
        <begin position="1"/>
        <end position="293"/>
    </location>
</feature>
<feature type="domain" description="SGF29 C-terminal" evidence="4">
    <location>
        <begin position="152"/>
        <end position="293"/>
    </location>
</feature>
<feature type="region of interest" description="Histone H3K4me3 N-terminus binding" evidence="4">
    <location>
        <begin position="194"/>
        <end position="196"/>
    </location>
</feature>
<feature type="region of interest" description="Histone H3K4me3 N-terminus binding" evidence="4">
    <location>
        <begin position="240"/>
        <end position="243"/>
    </location>
</feature>
<feature type="region of interest" description="Histone H3K4me3 binding" evidence="4">
    <location>
        <begin position="264"/>
        <end position="266"/>
    </location>
</feature>
<feature type="coiled-coil region" evidence="3">
    <location>
        <begin position="3"/>
        <end position="86"/>
    </location>
</feature>
<feature type="site" description="Histone H3K4me3 binding" evidence="4">
    <location>
        <position position="238"/>
    </location>
</feature>
<feature type="site" description="Histone H3K4me3 binding" evidence="4">
    <location>
        <position position="245"/>
    </location>
</feature>
<feature type="modified residue" description="N6-acetyllysine" evidence="2">
    <location>
        <position position="288"/>
    </location>
</feature>
<feature type="sequence conflict" description="In Ref. 2; AAH26784." evidence="6" ref="2">
    <original>E</original>
    <variation>D</variation>
    <location>
        <position position="231"/>
    </location>
</feature>
<proteinExistence type="evidence at protein level"/>
<dbReference type="EMBL" id="AK006287">
    <property type="protein sequence ID" value="BAB24506.1"/>
    <property type="molecule type" value="mRNA"/>
</dbReference>
<dbReference type="EMBL" id="AK139102">
    <property type="protein sequence ID" value="BAE23890.1"/>
    <property type="molecule type" value="mRNA"/>
</dbReference>
<dbReference type="EMBL" id="AK169898">
    <property type="protein sequence ID" value="BAE41445.1"/>
    <property type="molecule type" value="mRNA"/>
</dbReference>
<dbReference type="EMBL" id="BC026784">
    <property type="protein sequence ID" value="AAH26784.1"/>
    <property type="molecule type" value="mRNA"/>
</dbReference>
<dbReference type="CCDS" id="CCDS21837.1"/>
<dbReference type="RefSeq" id="NP_083615.3">
    <property type="nucleotide sequence ID" value="NM_029339.3"/>
</dbReference>
<dbReference type="RefSeq" id="XP_017167854.1">
    <property type="nucleotide sequence ID" value="XM_017312365.2"/>
</dbReference>
<dbReference type="SMR" id="Q9DA08"/>
<dbReference type="BioGRID" id="217581">
    <property type="interactions" value="8"/>
</dbReference>
<dbReference type="ComplexPortal" id="CPX-1025">
    <property type="entry name" value="GCN5-containing ATAC complex"/>
</dbReference>
<dbReference type="ComplexPortal" id="CPX-1029">
    <property type="entry name" value="PCAF-containing ATAC complex"/>
</dbReference>
<dbReference type="ComplexPortal" id="CPX-6803">
    <property type="entry name" value="SAGA complex, KAT2B variant"/>
</dbReference>
<dbReference type="ComplexPortal" id="CPX-920">
    <property type="entry name" value="SAGA complex, KAT2A variant"/>
</dbReference>
<dbReference type="FunCoup" id="Q9DA08">
    <property type="interactions" value="1172"/>
</dbReference>
<dbReference type="IntAct" id="Q9DA08">
    <property type="interactions" value="3"/>
</dbReference>
<dbReference type="MINT" id="Q9DA08"/>
<dbReference type="STRING" id="10090.ENSMUSP00000032956"/>
<dbReference type="iPTMnet" id="Q9DA08"/>
<dbReference type="PhosphoSitePlus" id="Q9DA08"/>
<dbReference type="PaxDb" id="10090-ENSMUSP00000032956"/>
<dbReference type="PeptideAtlas" id="Q9DA08"/>
<dbReference type="ProteomicsDB" id="256979"/>
<dbReference type="Pumba" id="Q9DA08"/>
<dbReference type="Antibodypedia" id="56026">
    <property type="antibodies" value="112 antibodies from 20 providers"/>
</dbReference>
<dbReference type="DNASU" id="75565"/>
<dbReference type="Ensembl" id="ENSMUST00000032956.10">
    <property type="protein sequence ID" value="ENSMUSP00000032956.9"/>
    <property type="gene ID" value="ENSMUSG00000030714.15"/>
</dbReference>
<dbReference type="GeneID" id="75565"/>
<dbReference type="KEGG" id="mmu:75565"/>
<dbReference type="UCSC" id="uc009jse.2">
    <property type="organism name" value="mouse"/>
</dbReference>
<dbReference type="AGR" id="MGI:1922815"/>
<dbReference type="CTD" id="112869"/>
<dbReference type="MGI" id="MGI:1922815">
    <property type="gene designation" value="Sgf29"/>
</dbReference>
<dbReference type="VEuPathDB" id="HostDB:ENSMUSG00000030714"/>
<dbReference type="eggNOG" id="KOG3038">
    <property type="taxonomic scope" value="Eukaryota"/>
</dbReference>
<dbReference type="GeneTree" id="ENSGT00390000015229"/>
<dbReference type="HOGENOM" id="CLU_056816_0_0_1"/>
<dbReference type="InParanoid" id="Q9DA08"/>
<dbReference type="OMA" id="EPTYIAK"/>
<dbReference type="OrthoDB" id="10265994at2759"/>
<dbReference type="PhylomeDB" id="Q9DA08"/>
<dbReference type="TreeFam" id="TF314958"/>
<dbReference type="Reactome" id="R-MMU-9772755">
    <property type="pathway name" value="Formation of WDR5-containing histone-modifying complexes"/>
</dbReference>
<dbReference type="BioGRID-ORCS" id="75565">
    <property type="hits" value="21 hits in 47 CRISPR screens"/>
</dbReference>
<dbReference type="ChiTaRS" id="Sgf29">
    <property type="organism name" value="mouse"/>
</dbReference>
<dbReference type="PRO" id="PR:Q9DA08"/>
<dbReference type="Proteomes" id="UP000000589">
    <property type="component" value="Chromosome 7"/>
</dbReference>
<dbReference type="RNAct" id="Q9DA08">
    <property type="molecule type" value="protein"/>
</dbReference>
<dbReference type="Bgee" id="ENSMUSG00000030714">
    <property type="expression patterns" value="Expressed in primary oocyte and 259 other cell types or tissues"/>
</dbReference>
<dbReference type="ExpressionAtlas" id="Q9DA08">
    <property type="expression patterns" value="baseline and differential"/>
</dbReference>
<dbReference type="GO" id="GO:0140672">
    <property type="term" value="C:ATAC complex"/>
    <property type="evidence" value="ECO:0000314"/>
    <property type="project" value="MGI"/>
</dbReference>
<dbReference type="GO" id="GO:0072686">
    <property type="term" value="C:mitotic spindle"/>
    <property type="evidence" value="ECO:0000303"/>
    <property type="project" value="ComplexPortal"/>
</dbReference>
<dbReference type="GO" id="GO:0005634">
    <property type="term" value="C:nucleus"/>
    <property type="evidence" value="ECO:0007669"/>
    <property type="project" value="UniProtKB-SubCell"/>
</dbReference>
<dbReference type="GO" id="GO:0000124">
    <property type="term" value="C:SAGA complex"/>
    <property type="evidence" value="ECO:0000303"/>
    <property type="project" value="ComplexPortal"/>
</dbReference>
<dbReference type="GO" id="GO:0070461">
    <property type="term" value="C:SAGA-type complex"/>
    <property type="evidence" value="ECO:0000250"/>
    <property type="project" value="UniProtKB"/>
</dbReference>
<dbReference type="GO" id="GO:0140003">
    <property type="term" value="F:histone H3K36me3 reader activity"/>
    <property type="evidence" value="ECO:0000250"/>
    <property type="project" value="UniProtKB"/>
</dbReference>
<dbReference type="GO" id="GO:0035064">
    <property type="term" value="F:methylated histone binding"/>
    <property type="evidence" value="ECO:0007669"/>
    <property type="project" value="Ensembl"/>
</dbReference>
<dbReference type="GO" id="GO:0140034">
    <property type="term" value="F:methylation-dependent protein binding"/>
    <property type="evidence" value="ECO:0000314"/>
    <property type="project" value="UniProtKB"/>
</dbReference>
<dbReference type="GO" id="GO:0000122">
    <property type="term" value="P:negative regulation of transcription by RNA polymerase II"/>
    <property type="evidence" value="ECO:0007669"/>
    <property type="project" value="Ensembl"/>
</dbReference>
<dbReference type="GO" id="GO:0045893">
    <property type="term" value="P:positive regulation of DNA-templated transcription"/>
    <property type="evidence" value="ECO:0000303"/>
    <property type="project" value="ComplexPortal"/>
</dbReference>
<dbReference type="GO" id="GO:0051726">
    <property type="term" value="P:regulation of cell cycle"/>
    <property type="evidence" value="ECO:0000315"/>
    <property type="project" value="ComplexPortal"/>
</dbReference>
<dbReference type="GO" id="GO:0051302">
    <property type="term" value="P:regulation of cell division"/>
    <property type="evidence" value="ECO:0000314"/>
    <property type="project" value="ComplexPortal"/>
</dbReference>
<dbReference type="GO" id="GO:0006282">
    <property type="term" value="P:regulation of DNA repair"/>
    <property type="evidence" value="ECO:0000314"/>
    <property type="project" value="UniProt"/>
</dbReference>
<dbReference type="GO" id="GO:0006355">
    <property type="term" value="P:regulation of DNA-templated transcription"/>
    <property type="evidence" value="ECO:0000266"/>
    <property type="project" value="ComplexPortal"/>
</dbReference>
<dbReference type="GO" id="GO:0045995">
    <property type="term" value="P:regulation of embryonic development"/>
    <property type="evidence" value="ECO:0000314"/>
    <property type="project" value="ComplexPortal"/>
</dbReference>
<dbReference type="GO" id="GO:0043484">
    <property type="term" value="P:regulation of RNA splicing"/>
    <property type="evidence" value="ECO:0000303"/>
    <property type="project" value="ComplexPortal"/>
</dbReference>
<dbReference type="GO" id="GO:0006357">
    <property type="term" value="P:regulation of transcription by RNA polymerase II"/>
    <property type="evidence" value="ECO:0000266"/>
    <property type="project" value="ComplexPortal"/>
</dbReference>
<dbReference type="GO" id="GO:0034976">
    <property type="term" value="P:response to endoplasmic reticulum stress"/>
    <property type="evidence" value="ECO:0007669"/>
    <property type="project" value="Ensembl"/>
</dbReference>
<dbReference type="GO" id="GO:0045815">
    <property type="term" value="P:transcription initiation-coupled chromatin remodeling"/>
    <property type="evidence" value="ECO:0000250"/>
    <property type="project" value="UniProtKB"/>
</dbReference>
<dbReference type="CDD" id="cd20393">
    <property type="entry name" value="Tudor_SGF29_rpt1"/>
    <property type="match status" value="1"/>
</dbReference>
<dbReference type="CDD" id="cd20394">
    <property type="entry name" value="Tudor_SGF29_rpt2"/>
    <property type="match status" value="1"/>
</dbReference>
<dbReference type="FunFam" id="2.30.30.140:FF:000026">
    <property type="entry name" value="SAGA-associated factor 29 homolog"/>
    <property type="match status" value="1"/>
</dbReference>
<dbReference type="FunFam" id="2.30.30.140:FF:000029">
    <property type="entry name" value="SAGA-associated factor 29 homolog"/>
    <property type="match status" value="1"/>
</dbReference>
<dbReference type="Gene3D" id="2.30.30.140">
    <property type="match status" value="2"/>
</dbReference>
<dbReference type="InterPro" id="IPR037802">
    <property type="entry name" value="SGF29"/>
</dbReference>
<dbReference type="InterPro" id="IPR010750">
    <property type="entry name" value="SGF29_tudor-like_dom"/>
</dbReference>
<dbReference type="InterPro" id="IPR047288">
    <property type="entry name" value="Tudor_SGF29_rpt1"/>
</dbReference>
<dbReference type="InterPro" id="IPR047287">
    <property type="entry name" value="Tudor_SGF29_rpt2"/>
</dbReference>
<dbReference type="PANTHER" id="PTHR21539">
    <property type="entry name" value="SAGA-ASSOCIATED FACTOR 29"/>
    <property type="match status" value="1"/>
</dbReference>
<dbReference type="PANTHER" id="PTHR21539:SF0">
    <property type="entry name" value="SAGA-ASSOCIATED FACTOR 29"/>
    <property type="match status" value="1"/>
</dbReference>
<dbReference type="Pfam" id="PF07039">
    <property type="entry name" value="SGF29_Tudor"/>
    <property type="match status" value="1"/>
</dbReference>
<dbReference type="PROSITE" id="PS51518">
    <property type="entry name" value="SGF29_C"/>
    <property type="match status" value="1"/>
</dbReference>
<sequence length="293" mass="33298">MALVSADSRIAELLTELHQLIKQTQEERSRSEHNLVNIQKTHERMQTENKISPYYRTKLRGLYTTAKTDAEAECNILRKALDKIAEIKSLLEERRIAAKIAGLYNDSEPPRKTMRRGVLMTLLQQSAMTLPLWIGKPGDKPPPLCGAIPASGDYVAKPGDKVAARVKAVEGDEQWILAEVVSYSHATNKYEVDDIDEEGKERHTLSRRRIIPLPQWKANPETDPEALFQKEQLVLALYPQTTCFYRALIHTPPQRPQDDYSVLFEDTSYADGYSPPLNVAQRYVVACKEPKKK</sequence>
<evidence type="ECO:0000250" key="1">
    <source>
        <dbReference type="UniProtKB" id="P0C606"/>
    </source>
</evidence>
<evidence type="ECO:0000250" key="2">
    <source>
        <dbReference type="UniProtKB" id="Q96ES7"/>
    </source>
</evidence>
<evidence type="ECO:0000255" key="3"/>
<evidence type="ECO:0000255" key="4">
    <source>
        <dbReference type="PROSITE-ProRule" id="PRU00851"/>
    </source>
</evidence>
<evidence type="ECO:0000269" key="5">
    <source>
    </source>
</evidence>
<evidence type="ECO:0000305" key="6"/>
<evidence type="ECO:0000312" key="7">
    <source>
        <dbReference type="MGI" id="MGI:1922815"/>
    </source>
</evidence>
<reference key="1">
    <citation type="journal article" date="2005" name="Science">
        <title>The transcriptional landscape of the mammalian genome.</title>
        <authorList>
            <person name="Carninci P."/>
            <person name="Kasukawa T."/>
            <person name="Katayama S."/>
            <person name="Gough J."/>
            <person name="Frith M.C."/>
            <person name="Maeda N."/>
            <person name="Oyama R."/>
            <person name="Ravasi T."/>
            <person name="Lenhard B."/>
            <person name="Wells C."/>
            <person name="Kodzius R."/>
            <person name="Shimokawa K."/>
            <person name="Bajic V.B."/>
            <person name="Brenner S.E."/>
            <person name="Batalov S."/>
            <person name="Forrest A.R."/>
            <person name="Zavolan M."/>
            <person name="Davis M.J."/>
            <person name="Wilming L.G."/>
            <person name="Aidinis V."/>
            <person name="Allen J.E."/>
            <person name="Ambesi-Impiombato A."/>
            <person name="Apweiler R."/>
            <person name="Aturaliya R.N."/>
            <person name="Bailey T.L."/>
            <person name="Bansal M."/>
            <person name="Baxter L."/>
            <person name="Beisel K.W."/>
            <person name="Bersano T."/>
            <person name="Bono H."/>
            <person name="Chalk A.M."/>
            <person name="Chiu K.P."/>
            <person name="Choudhary V."/>
            <person name="Christoffels A."/>
            <person name="Clutterbuck D.R."/>
            <person name="Crowe M.L."/>
            <person name="Dalla E."/>
            <person name="Dalrymple B.P."/>
            <person name="de Bono B."/>
            <person name="Della Gatta G."/>
            <person name="di Bernardo D."/>
            <person name="Down T."/>
            <person name="Engstrom P."/>
            <person name="Fagiolini M."/>
            <person name="Faulkner G."/>
            <person name="Fletcher C.F."/>
            <person name="Fukushima T."/>
            <person name="Furuno M."/>
            <person name="Futaki S."/>
            <person name="Gariboldi M."/>
            <person name="Georgii-Hemming P."/>
            <person name="Gingeras T.R."/>
            <person name="Gojobori T."/>
            <person name="Green R.E."/>
            <person name="Gustincich S."/>
            <person name="Harbers M."/>
            <person name="Hayashi Y."/>
            <person name="Hensch T.K."/>
            <person name="Hirokawa N."/>
            <person name="Hill D."/>
            <person name="Huminiecki L."/>
            <person name="Iacono M."/>
            <person name="Ikeo K."/>
            <person name="Iwama A."/>
            <person name="Ishikawa T."/>
            <person name="Jakt M."/>
            <person name="Kanapin A."/>
            <person name="Katoh M."/>
            <person name="Kawasawa Y."/>
            <person name="Kelso J."/>
            <person name="Kitamura H."/>
            <person name="Kitano H."/>
            <person name="Kollias G."/>
            <person name="Krishnan S.P."/>
            <person name="Kruger A."/>
            <person name="Kummerfeld S.K."/>
            <person name="Kurochkin I.V."/>
            <person name="Lareau L.F."/>
            <person name="Lazarevic D."/>
            <person name="Lipovich L."/>
            <person name="Liu J."/>
            <person name="Liuni S."/>
            <person name="McWilliam S."/>
            <person name="Madan Babu M."/>
            <person name="Madera M."/>
            <person name="Marchionni L."/>
            <person name="Matsuda H."/>
            <person name="Matsuzawa S."/>
            <person name="Miki H."/>
            <person name="Mignone F."/>
            <person name="Miyake S."/>
            <person name="Morris K."/>
            <person name="Mottagui-Tabar S."/>
            <person name="Mulder N."/>
            <person name="Nakano N."/>
            <person name="Nakauchi H."/>
            <person name="Ng P."/>
            <person name="Nilsson R."/>
            <person name="Nishiguchi S."/>
            <person name="Nishikawa S."/>
            <person name="Nori F."/>
            <person name="Ohara O."/>
            <person name="Okazaki Y."/>
            <person name="Orlando V."/>
            <person name="Pang K.C."/>
            <person name="Pavan W.J."/>
            <person name="Pavesi G."/>
            <person name="Pesole G."/>
            <person name="Petrovsky N."/>
            <person name="Piazza S."/>
            <person name="Reed J."/>
            <person name="Reid J.F."/>
            <person name="Ring B.Z."/>
            <person name="Ringwald M."/>
            <person name="Rost B."/>
            <person name="Ruan Y."/>
            <person name="Salzberg S.L."/>
            <person name="Sandelin A."/>
            <person name="Schneider C."/>
            <person name="Schoenbach C."/>
            <person name="Sekiguchi K."/>
            <person name="Semple C.A."/>
            <person name="Seno S."/>
            <person name="Sessa L."/>
            <person name="Sheng Y."/>
            <person name="Shibata Y."/>
            <person name="Shimada H."/>
            <person name="Shimada K."/>
            <person name="Silva D."/>
            <person name="Sinclair B."/>
            <person name="Sperling S."/>
            <person name="Stupka E."/>
            <person name="Sugiura K."/>
            <person name="Sultana R."/>
            <person name="Takenaka Y."/>
            <person name="Taki K."/>
            <person name="Tammoja K."/>
            <person name="Tan S.L."/>
            <person name="Tang S."/>
            <person name="Taylor M.S."/>
            <person name="Tegner J."/>
            <person name="Teichmann S.A."/>
            <person name="Ueda H.R."/>
            <person name="van Nimwegen E."/>
            <person name="Verardo R."/>
            <person name="Wei C.L."/>
            <person name="Yagi K."/>
            <person name="Yamanishi H."/>
            <person name="Zabarovsky E."/>
            <person name="Zhu S."/>
            <person name="Zimmer A."/>
            <person name="Hide W."/>
            <person name="Bult C."/>
            <person name="Grimmond S.M."/>
            <person name="Teasdale R.D."/>
            <person name="Liu E.T."/>
            <person name="Brusic V."/>
            <person name="Quackenbush J."/>
            <person name="Wahlestedt C."/>
            <person name="Mattick J.S."/>
            <person name="Hume D.A."/>
            <person name="Kai C."/>
            <person name="Sasaki D."/>
            <person name="Tomaru Y."/>
            <person name="Fukuda S."/>
            <person name="Kanamori-Katayama M."/>
            <person name="Suzuki M."/>
            <person name="Aoki J."/>
            <person name="Arakawa T."/>
            <person name="Iida J."/>
            <person name="Imamura K."/>
            <person name="Itoh M."/>
            <person name="Kato T."/>
            <person name="Kawaji H."/>
            <person name="Kawagashira N."/>
            <person name="Kawashima T."/>
            <person name="Kojima M."/>
            <person name="Kondo S."/>
            <person name="Konno H."/>
            <person name="Nakano K."/>
            <person name="Ninomiya N."/>
            <person name="Nishio T."/>
            <person name="Okada M."/>
            <person name="Plessy C."/>
            <person name="Shibata K."/>
            <person name="Shiraki T."/>
            <person name="Suzuki S."/>
            <person name="Tagami M."/>
            <person name="Waki K."/>
            <person name="Watahiki A."/>
            <person name="Okamura-Oho Y."/>
            <person name="Suzuki H."/>
            <person name="Kawai J."/>
            <person name="Hayashizaki Y."/>
        </authorList>
    </citation>
    <scope>NUCLEOTIDE SEQUENCE [LARGE SCALE MRNA]</scope>
    <source>
        <strain>C57BL/6J</strain>
        <strain>NOD</strain>
        <tissue>Cerebellum</tissue>
        <tissue>Testis</tissue>
    </source>
</reference>
<reference key="2">
    <citation type="journal article" date="2004" name="Genome Res.">
        <title>The status, quality, and expansion of the NIH full-length cDNA project: the Mammalian Gene Collection (MGC).</title>
        <authorList>
            <consortium name="The MGC Project Team"/>
        </authorList>
    </citation>
    <scope>NUCLEOTIDE SEQUENCE [LARGE SCALE MRNA]</scope>
    <source>
        <strain>FVB/N</strain>
        <tissue>Colon</tissue>
    </source>
</reference>
<reference key="3">
    <citation type="journal article" date="2022" name="Bone Res.">
        <title>RIOX1-demethylated cGAS regulates ionizing radiation-elicited DNA repair.</title>
        <authorList>
            <person name="Xiao Y."/>
            <person name="Li J."/>
            <person name="Liao X."/>
            <person name="He Y."/>
            <person name="He T."/>
            <person name="Yang C."/>
            <person name="Jiang L."/>
            <person name="Jeon S.M."/>
            <person name="Lee J.H."/>
            <person name="Chen Y."/>
            <person name="Liu R."/>
            <person name="Chen Q."/>
        </authorList>
    </citation>
    <scope>FUNCTION</scope>
    <scope>INTERACTION WITH CGAS</scope>
</reference>
<keyword id="KW-0007">Acetylation</keyword>
<keyword id="KW-0156">Chromatin regulator</keyword>
<keyword id="KW-0175">Coiled coil</keyword>
<keyword id="KW-0539">Nucleus</keyword>
<keyword id="KW-1185">Reference proteome</keyword>
<keyword id="KW-0804">Transcription</keyword>
<keyword id="KW-0805">Transcription regulation</keyword>
<gene>
    <name evidence="7" type="primary">Sgf29</name>
    <name type="synonym">Ccdc101</name>
</gene>
<protein>
    <recommendedName>
        <fullName evidence="6">SAGA-associated factor 29</fullName>
    </recommendedName>
    <alternativeName>
        <fullName>Coiled-coil domain-containing protein 101</fullName>
    </alternativeName>
    <alternativeName>
        <fullName evidence="7">SAGA complex-associated factor 29</fullName>
    </alternativeName>
</protein>